<protein>
    <recommendedName>
        <fullName>Probable serine acetyltransferase 1</fullName>
        <ecNumber>2.3.1.30</ecNumber>
    </recommendedName>
    <alternativeName>
        <fullName>OsSERAT1;1</fullName>
    </alternativeName>
</protein>
<feature type="chain" id="PRO_0000363658" description="Probable serine acetyltransferase 1">
    <location>
        <begin position="1"/>
        <end position="303"/>
    </location>
</feature>
<feature type="region of interest" description="Disordered" evidence="2">
    <location>
        <begin position="1"/>
        <end position="36"/>
    </location>
</feature>
<feature type="region of interest" description="Disordered" evidence="2">
    <location>
        <begin position="271"/>
        <end position="290"/>
    </location>
</feature>
<keyword id="KW-0012">Acyltransferase</keyword>
<keyword id="KW-0028">Amino-acid biosynthesis</keyword>
<keyword id="KW-1185">Reference proteome</keyword>
<keyword id="KW-0808">Transferase</keyword>
<organism>
    <name type="scientific">Oryza sativa subsp. japonica</name>
    <name type="common">Rice</name>
    <dbReference type="NCBI Taxonomy" id="39947"/>
    <lineage>
        <taxon>Eukaryota</taxon>
        <taxon>Viridiplantae</taxon>
        <taxon>Streptophyta</taxon>
        <taxon>Embryophyta</taxon>
        <taxon>Tracheophyta</taxon>
        <taxon>Spermatophyta</taxon>
        <taxon>Magnoliopsida</taxon>
        <taxon>Liliopsida</taxon>
        <taxon>Poales</taxon>
        <taxon>Poaceae</taxon>
        <taxon>BOP clade</taxon>
        <taxon>Oryzoideae</taxon>
        <taxon>Oryzeae</taxon>
        <taxon>Oryzinae</taxon>
        <taxon>Oryza</taxon>
        <taxon>Oryza sativa</taxon>
    </lineage>
</organism>
<name>SAT1_ORYSJ</name>
<accession>Q8W0E4</accession>
<sequence>MTAGQPLRDDPQPRRHSPPALHPAVVPAYPPPESDADESWVWSQIKAEARRDADAEPALASFLYATVLSHPSLDRSLAFHLANKLCSSTLLSTLLYDLFVASLAAHPTLRAAVVADLLAARSRDPACVGFSHCLLNYKGFLAIQAQRVAHVLWAQDRRALALALQSRVAEVFAVDIHPAAAIGKGVLLDHATGVVIGETAVIGDNVSILHHVTLGGTGKAVGDRHPKIGDGVLIGAGATILGNVRIGAGAKIGAGSLVLIDVPPRTTAVGNPARLLGGKKGDDMPGESMDHTSFIQQWSDYSI</sequence>
<comment type="catalytic activity">
    <reaction>
        <text>L-serine + acetyl-CoA = O-acetyl-L-serine + CoA</text>
        <dbReference type="Rhea" id="RHEA:24560"/>
        <dbReference type="ChEBI" id="CHEBI:33384"/>
        <dbReference type="ChEBI" id="CHEBI:57287"/>
        <dbReference type="ChEBI" id="CHEBI:57288"/>
        <dbReference type="ChEBI" id="CHEBI:58340"/>
        <dbReference type="EC" id="2.3.1.30"/>
    </reaction>
</comment>
<comment type="pathway">
    <text>Amino-acid biosynthesis; L-cysteine biosynthesis; L-cysteine from L-serine: step 1/2.</text>
</comment>
<comment type="subunit">
    <text evidence="1">Homomultimer.</text>
</comment>
<comment type="similarity">
    <text evidence="3">Belongs to the transferase hexapeptide repeat family.</text>
</comment>
<dbReference type="EC" id="2.3.1.30"/>
<dbReference type="EMBL" id="AP003292">
    <property type="protein sequence ID" value="BAB84419.1"/>
    <property type="molecule type" value="Genomic_DNA"/>
</dbReference>
<dbReference type="EMBL" id="AP008207">
    <property type="protein sequence ID" value="BAF06006.1"/>
    <property type="molecule type" value="Genomic_DNA"/>
</dbReference>
<dbReference type="EMBL" id="AP014957">
    <property type="status" value="NOT_ANNOTATED_CDS"/>
    <property type="molecule type" value="Genomic_DNA"/>
</dbReference>
<dbReference type="EMBL" id="CM000138">
    <property type="protein sequence ID" value="EAZ13363.1"/>
    <property type="molecule type" value="Genomic_DNA"/>
</dbReference>
<dbReference type="EMBL" id="AK071186">
    <property type="status" value="NOT_ANNOTATED_CDS"/>
    <property type="molecule type" value="mRNA"/>
</dbReference>
<dbReference type="RefSeq" id="XP_015648299.1">
    <property type="nucleotide sequence ID" value="XM_015792813.1"/>
</dbReference>
<dbReference type="SMR" id="Q8W0E4"/>
<dbReference type="FunCoup" id="Q8W0E4">
    <property type="interactions" value="497"/>
</dbReference>
<dbReference type="STRING" id="39947.Q8W0E4"/>
<dbReference type="PaxDb" id="39947-Q8W0E4"/>
<dbReference type="EnsemblPlants" id="Os01t0720700-01">
    <property type="protein sequence ID" value="Os01t0720700-01"/>
    <property type="gene ID" value="Os01g0720700"/>
</dbReference>
<dbReference type="Gramene" id="Os01t0720700-01">
    <property type="protein sequence ID" value="Os01t0720700-01"/>
    <property type="gene ID" value="Os01g0720700"/>
</dbReference>
<dbReference type="KEGG" id="dosa:Os01g0720700"/>
<dbReference type="InParanoid" id="Q8W0E4"/>
<dbReference type="OrthoDB" id="25818at2759"/>
<dbReference type="PlantReactome" id="R-OSA-1119331">
    <property type="pathway name" value="Cysteine biosynthesis I"/>
</dbReference>
<dbReference type="UniPathway" id="UPA00136">
    <property type="reaction ID" value="UER00199"/>
</dbReference>
<dbReference type="Proteomes" id="UP000000763">
    <property type="component" value="Chromosome 1"/>
</dbReference>
<dbReference type="Proteomes" id="UP000007752">
    <property type="component" value="Chromosome 1"/>
</dbReference>
<dbReference type="Proteomes" id="UP000059680">
    <property type="component" value="Chromosome 1"/>
</dbReference>
<dbReference type="GO" id="GO:0005829">
    <property type="term" value="C:cytosol"/>
    <property type="evidence" value="ECO:0000318"/>
    <property type="project" value="GO_Central"/>
</dbReference>
<dbReference type="GO" id="GO:0009001">
    <property type="term" value="F:serine O-acetyltransferase activity"/>
    <property type="evidence" value="ECO:0000318"/>
    <property type="project" value="GO_Central"/>
</dbReference>
<dbReference type="GO" id="GO:0006535">
    <property type="term" value="P:cysteine biosynthetic process from serine"/>
    <property type="evidence" value="ECO:0007669"/>
    <property type="project" value="InterPro"/>
</dbReference>
<dbReference type="CDD" id="cd03354">
    <property type="entry name" value="LbH_SAT"/>
    <property type="match status" value="1"/>
</dbReference>
<dbReference type="FunFam" id="2.160.10.10:FF:000002">
    <property type="entry name" value="Serine acetyltransferase"/>
    <property type="match status" value="1"/>
</dbReference>
<dbReference type="FunFam" id="1.10.3130.10:FF:000004">
    <property type="entry name" value="Serine acetyltransferase 5"/>
    <property type="match status" value="1"/>
</dbReference>
<dbReference type="Gene3D" id="2.160.10.10">
    <property type="entry name" value="Hexapeptide repeat proteins"/>
    <property type="match status" value="1"/>
</dbReference>
<dbReference type="Gene3D" id="1.10.3130.10">
    <property type="entry name" value="serine acetyltransferase, domain 1"/>
    <property type="match status" value="1"/>
</dbReference>
<dbReference type="InterPro" id="IPR001451">
    <property type="entry name" value="Hexapep"/>
</dbReference>
<dbReference type="InterPro" id="IPR018357">
    <property type="entry name" value="Hexapep_transf_CS"/>
</dbReference>
<dbReference type="InterPro" id="IPR045304">
    <property type="entry name" value="LbH_SAT"/>
</dbReference>
<dbReference type="InterPro" id="IPR010493">
    <property type="entry name" value="Ser_AcTrfase_N"/>
</dbReference>
<dbReference type="InterPro" id="IPR042122">
    <property type="entry name" value="Ser_AcTrfase_N_sf"/>
</dbReference>
<dbReference type="InterPro" id="IPR005881">
    <property type="entry name" value="Ser_O-AcTrfase"/>
</dbReference>
<dbReference type="InterPro" id="IPR053376">
    <property type="entry name" value="Serine_acetyltransferase"/>
</dbReference>
<dbReference type="InterPro" id="IPR011004">
    <property type="entry name" value="Trimer_LpxA-like_sf"/>
</dbReference>
<dbReference type="NCBIfam" id="TIGR01172">
    <property type="entry name" value="cysE"/>
    <property type="match status" value="1"/>
</dbReference>
<dbReference type="NCBIfam" id="NF041874">
    <property type="entry name" value="EPS_EpsC"/>
    <property type="match status" value="1"/>
</dbReference>
<dbReference type="PANTHER" id="PTHR42811">
    <property type="entry name" value="SERINE ACETYLTRANSFERASE"/>
    <property type="match status" value="1"/>
</dbReference>
<dbReference type="Pfam" id="PF00132">
    <property type="entry name" value="Hexapep"/>
    <property type="match status" value="1"/>
</dbReference>
<dbReference type="Pfam" id="PF06426">
    <property type="entry name" value="SATase_N"/>
    <property type="match status" value="1"/>
</dbReference>
<dbReference type="SMART" id="SM00971">
    <property type="entry name" value="SATase_N"/>
    <property type="match status" value="1"/>
</dbReference>
<dbReference type="SUPFAM" id="SSF51161">
    <property type="entry name" value="Trimeric LpxA-like enzymes"/>
    <property type="match status" value="1"/>
</dbReference>
<dbReference type="PROSITE" id="PS00101">
    <property type="entry name" value="HEXAPEP_TRANSFERASES"/>
    <property type="match status" value="1"/>
</dbReference>
<evidence type="ECO:0000250" key="1"/>
<evidence type="ECO:0000256" key="2">
    <source>
        <dbReference type="SAM" id="MobiDB-lite"/>
    </source>
</evidence>
<evidence type="ECO:0000305" key="3"/>
<proteinExistence type="evidence at transcript level"/>
<reference key="1">
    <citation type="journal article" date="2002" name="Nature">
        <title>The genome sequence and structure of rice chromosome 1.</title>
        <authorList>
            <person name="Sasaki T."/>
            <person name="Matsumoto T."/>
            <person name="Yamamoto K."/>
            <person name="Sakata K."/>
            <person name="Baba T."/>
            <person name="Katayose Y."/>
            <person name="Wu J."/>
            <person name="Niimura Y."/>
            <person name="Cheng Z."/>
            <person name="Nagamura Y."/>
            <person name="Antonio B.A."/>
            <person name="Kanamori H."/>
            <person name="Hosokawa S."/>
            <person name="Masukawa M."/>
            <person name="Arikawa K."/>
            <person name="Chiden Y."/>
            <person name="Hayashi M."/>
            <person name="Okamoto M."/>
            <person name="Ando T."/>
            <person name="Aoki H."/>
            <person name="Arita K."/>
            <person name="Hamada M."/>
            <person name="Harada C."/>
            <person name="Hijishita S."/>
            <person name="Honda M."/>
            <person name="Ichikawa Y."/>
            <person name="Idonuma A."/>
            <person name="Iijima M."/>
            <person name="Ikeda M."/>
            <person name="Ikeno M."/>
            <person name="Ito S."/>
            <person name="Ito T."/>
            <person name="Ito Y."/>
            <person name="Ito Y."/>
            <person name="Iwabuchi A."/>
            <person name="Kamiya K."/>
            <person name="Karasawa W."/>
            <person name="Katagiri S."/>
            <person name="Kikuta A."/>
            <person name="Kobayashi N."/>
            <person name="Kono I."/>
            <person name="Machita K."/>
            <person name="Maehara T."/>
            <person name="Mizuno H."/>
            <person name="Mizubayashi T."/>
            <person name="Mukai Y."/>
            <person name="Nagasaki H."/>
            <person name="Nakashima M."/>
            <person name="Nakama Y."/>
            <person name="Nakamichi Y."/>
            <person name="Nakamura M."/>
            <person name="Namiki N."/>
            <person name="Negishi M."/>
            <person name="Ohta I."/>
            <person name="Ono N."/>
            <person name="Saji S."/>
            <person name="Sakai K."/>
            <person name="Shibata M."/>
            <person name="Shimokawa T."/>
            <person name="Shomura A."/>
            <person name="Song J."/>
            <person name="Takazaki Y."/>
            <person name="Terasawa K."/>
            <person name="Tsuji K."/>
            <person name="Waki K."/>
            <person name="Yamagata H."/>
            <person name="Yamane H."/>
            <person name="Yoshiki S."/>
            <person name="Yoshihara R."/>
            <person name="Yukawa K."/>
            <person name="Zhong H."/>
            <person name="Iwama H."/>
            <person name="Endo T."/>
            <person name="Ito H."/>
            <person name="Hahn J.H."/>
            <person name="Kim H.-I."/>
            <person name="Eun M.-Y."/>
            <person name="Yano M."/>
            <person name="Jiang J."/>
            <person name="Gojobori T."/>
        </authorList>
    </citation>
    <scope>NUCLEOTIDE SEQUENCE [LARGE SCALE GENOMIC DNA]</scope>
    <source>
        <strain>cv. Nipponbare</strain>
    </source>
</reference>
<reference key="2">
    <citation type="journal article" date="2005" name="Nature">
        <title>The map-based sequence of the rice genome.</title>
        <authorList>
            <consortium name="International rice genome sequencing project (IRGSP)"/>
        </authorList>
    </citation>
    <scope>NUCLEOTIDE SEQUENCE [LARGE SCALE GENOMIC DNA]</scope>
    <source>
        <strain>cv. Nipponbare</strain>
    </source>
</reference>
<reference key="3">
    <citation type="journal article" date="2008" name="Nucleic Acids Res.">
        <title>The rice annotation project database (RAP-DB): 2008 update.</title>
        <authorList>
            <consortium name="The rice annotation project (RAP)"/>
        </authorList>
    </citation>
    <scope>GENOME REANNOTATION</scope>
    <source>
        <strain>cv. Nipponbare</strain>
    </source>
</reference>
<reference key="4">
    <citation type="journal article" date="2013" name="Rice">
        <title>Improvement of the Oryza sativa Nipponbare reference genome using next generation sequence and optical map data.</title>
        <authorList>
            <person name="Kawahara Y."/>
            <person name="de la Bastide M."/>
            <person name="Hamilton J.P."/>
            <person name="Kanamori H."/>
            <person name="McCombie W.R."/>
            <person name="Ouyang S."/>
            <person name="Schwartz D.C."/>
            <person name="Tanaka T."/>
            <person name="Wu J."/>
            <person name="Zhou S."/>
            <person name="Childs K.L."/>
            <person name="Davidson R.M."/>
            <person name="Lin H."/>
            <person name="Quesada-Ocampo L."/>
            <person name="Vaillancourt B."/>
            <person name="Sakai H."/>
            <person name="Lee S.S."/>
            <person name="Kim J."/>
            <person name="Numa H."/>
            <person name="Itoh T."/>
            <person name="Buell C.R."/>
            <person name="Matsumoto T."/>
        </authorList>
    </citation>
    <scope>GENOME REANNOTATION</scope>
    <source>
        <strain>cv. Nipponbare</strain>
    </source>
</reference>
<reference key="5">
    <citation type="journal article" date="2005" name="PLoS Biol.">
        <title>The genomes of Oryza sativa: a history of duplications.</title>
        <authorList>
            <person name="Yu J."/>
            <person name="Wang J."/>
            <person name="Lin W."/>
            <person name="Li S."/>
            <person name="Li H."/>
            <person name="Zhou J."/>
            <person name="Ni P."/>
            <person name="Dong W."/>
            <person name="Hu S."/>
            <person name="Zeng C."/>
            <person name="Zhang J."/>
            <person name="Zhang Y."/>
            <person name="Li R."/>
            <person name="Xu Z."/>
            <person name="Li S."/>
            <person name="Li X."/>
            <person name="Zheng H."/>
            <person name="Cong L."/>
            <person name="Lin L."/>
            <person name="Yin J."/>
            <person name="Geng J."/>
            <person name="Li G."/>
            <person name="Shi J."/>
            <person name="Liu J."/>
            <person name="Lv H."/>
            <person name="Li J."/>
            <person name="Wang J."/>
            <person name="Deng Y."/>
            <person name="Ran L."/>
            <person name="Shi X."/>
            <person name="Wang X."/>
            <person name="Wu Q."/>
            <person name="Li C."/>
            <person name="Ren X."/>
            <person name="Wang J."/>
            <person name="Wang X."/>
            <person name="Li D."/>
            <person name="Liu D."/>
            <person name="Zhang X."/>
            <person name="Ji Z."/>
            <person name="Zhao W."/>
            <person name="Sun Y."/>
            <person name="Zhang Z."/>
            <person name="Bao J."/>
            <person name="Han Y."/>
            <person name="Dong L."/>
            <person name="Ji J."/>
            <person name="Chen P."/>
            <person name="Wu S."/>
            <person name="Liu J."/>
            <person name="Xiao Y."/>
            <person name="Bu D."/>
            <person name="Tan J."/>
            <person name="Yang L."/>
            <person name="Ye C."/>
            <person name="Zhang J."/>
            <person name="Xu J."/>
            <person name="Zhou Y."/>
            <person name="Yu Y."/>
            <person name="Zhang B."/>
            <person name="Zhuang S."/>
            <person name="Wei H."/>
            <person name="Liu B."/>
            <person name="Lei M."/>
            <person name="Yu H."/>
            <person name="Li Y."/>
            <person name="Xu H."/>
            <person name="Wei S."/>
            <person name="He X."/>
            <person name="Fang L."/>
            <person name="Zhang Z."/>
            <person name="Zhang Y."/>
            <person name="Huang X."/>
            <person name="Su Z."/>
            <person name="Tong W."/>
            <person name="Li J."/>
            <person name="Tong Z."/>
            <person name="Li S."/>
            <person name="Ye J."/>
            <person name="Wang L."/>
            <person name="Fang L."/>
            <person name="Lei T."/>
            <person name="Chen C.-S."/>
            <person name="Chen H.-C."/>
            <person name="Xu Z."/>
            <person name="Li H."/>
            <person name="Huang H."/>
            <person name="Zhang F."/>
            <person name="Xu H."/>
            <person name="Li N."/>
            <person name="Zhao C."/>
            <person name="Li S."/>
            <person name="Dong L."/>
            <person name="Huang Y."/>
            <person name="Li L."/>
            <person name="Xi Y."/>
            <person name="Qi Q."/>
            <person name="Li W."/>
            <person name="Zhang B."/>
            <person name="Hu W."/>
            <person name="Zhang Y."/>
            <person name="Tian X."/>
            <person name="Jiao Y."/>
            <person name="Liang X."/>
            <person name="Jin J."/>
            <person name="Gao L."/>
            <person name="Zheng W."/>
            <person name="Hao B."/>
            <person name="Liu S.-M."/>
            <person name="Wang W."/>
            <person name="Yuan L."/>
            <person name="Cao M."/>
            <person name="McDermott J."/>
            <person name="Samudrala R."/>
            <person name="Wang J."/>
            <person name="Wong G.K.-S."/>
            <person name="Yang H."/>
        </authorList>
    </citation>
    <scope>NUCLEOTIDE SEQUENCE [LARGE SCALE GENOMIC DNA]</scope>
    <source>
        <strain>cv. Nipponbare</strain>
    </source>
</reference>
<reference key="6">
    <citation type="journal article" date="2003" name="Science">
        <title>Collection, mapping, and annotation of over 28,000 cDNA clones from japonica rice.</title>
        <authorList>
            <consortium name="The rice full-length cDNA consortium"/>
        </authorList>
    </citation>
    <scope>NUCLEOTIDE SEQUENCE [LARGE SCALE MRNA]</scope>
    <source>
        <strain>cv. Nipponbare</strain>
    </source>
</reference>
<gene>
    <name type="primary">SAT1</name>
    <name type="ordered locus">Os01g0720700</name>
    <name type="ordered locus">LOC_Os01g52260</name>
    <name type="ORF">OsJ_003188</name>
    <name type="ORF">P0690B02.9</name>
</gene>